<sequence length="71" mass="8165">MKQGIHPNYREVNVTCSCGNKFVTKSAMEKENFNIEVCSLCHPFYTGTQKIVDTTGRVDKFNNKFGNLFKR</sequence>
<name>RL31_NEIG1</name>
<organism>
    <name type="scientific">Neisseria gonorrhoeae (strain ATCC 700825 / FA 1090)</name>
    <dbReference type="NCBI Taxonomy" id="242231"/>
    <lineage>
        <taxon>Bacteria</taxon>
        <taxon>Pseudomonadati</taxon>
        <taxon>Pseudomonadota</taxon>
        <taxon>Betaproteobacteria</taxon>
        <taxon>Neisseriales</taxon>
        <taxon>Neisseriaceae</taxon>
        <taxon>Neisseria</taxon>
    </lineage>
</organism>
<evidence type="ECO:0000255" key="1">
    <source>
        <dbReference type="HAMAP-Rule" id="MF_00501"/>
    </source>
</evidence>
<evidence type="ECO:0000305" key="2"/>
<keyword id="KW-0479">Metal-binding</keyword>
<keyword id="KW-1185">Reference proteome</keyword>
<keyword id="KW-0687">Ribonucleoprotein</keyword>
<keyword id="KW-0689">Ribosomal protein</keyword>
<keyword id="KW-0694">RNA-binding</keyword>
<keyword id="KW-0699">rRNA-binding</keyword>
<keyword id="KW-0862">Zinc</keyword>
<comment type="function">
    <text evidence="1">Binds the 23S rRNA.</text>
</comment>
<comment type="cofactor">
    <cofactor evidence="1">
        <name>Zn(2+)</name>
        <dbReference type="ChEBI" id="CHEBI:29105"/>
    </cofactor>
    <text evidence="1">Binds 1 zinc ion per subunit.</text>
</comment>
<comment type="subunit">
    <text evidence="1">Part of the 50S ribosomal subunit.</text>
</comment>
<comment type="similarity">
    <text evidence="1">Belongs to the bacterial ribosomal protein bL31 family. Type A subfamily.</text>
</comment>
<accession>Q5F513</accession>
<feature type="chain" id="PRO_0000173134" description="Large ribosomal subunit protein bL31">
    <location>
        <begin position="1"/>
        <end position="71"/>
    </location>
</feature>
<feature type="binding site" evidence="1">
    <location>
        <position position="16"/>
    </location>
    <ligand>
        <name>Zn(2+)</name>
        <dbReference type="ChEBI" id="CHEBI:29105"/>
    </ligand>
</feature>
<feature type="binding site" evidence="1">
    <location>
        <position position="18"/>
    </location>
    <ligand>
        <name>Zn(2+)</name>
        <dbReference type="ChEBI" id="CHEBI:29105"/>
    </ligand>
</feature>
<feature type="binding site" evidence="1">
    <location>
        <position position="38"/>
    </location>
    <ligand>
        <name>Zn(2+)</name>
        <dbReference type="ChEBI" id="CHEBI:29105"/>
    </ligand>
</feature>
<feature type="binding site" evidence="1">
    <location>
        <position position="41"/>
    </location>
    <ligand>
        <name>Zn(2+)</name>
        <dbReference type="ChEBI" id="CHEBI:29105"/>
    </ligand>
</feature>
<reference key="1">
    <citation type="submission" date="2003-03" db="EMBL/GenBank/DDBJ databases">
        <title>The complete genome sequence of Neisseria gonorrhoeae.</title>
        <authorList>
            <person name="Lewis L.A."/>
            <person name="Gillaspy A.F."/>
            <person name="McLaughlin R.E."/>
            <person name="Gipson M."/>
            <person name="Ducey T.F."/>
            <person name="Ownbey T."/>
            <person name="Hartman K."/>
            <person name="Nydick C."/>
            <person name="Carson M.B."/>
            <person name="Vaughn J."/>
            <person name="Thomson C."/>
            <person name="Song L."/>
            <person name="Lin S."/>
            <person name="Yuan X."/>
            <person name="Najar F."/>
            <person name="Zhan M."/>
            <person name="Ren Q."/>
            <person name="Zhu H."/>
            <person name="Qi S."/>
            <person name="Kenton S.M."/>
            <person name="Lai H."/>
            <person name="White J.D."/>
            <person name="Clifton S."/>
            <person name="Roe B.A."/>
            <person name="Dyer D.W."/>
        </authorList>
    </citation>
    <scope>NUCLEOTIDE SEQUENCE [LARGE SCALE GENOMIC DNA]</scope>
    <source>
        <strain>ATCC 700825 / FA 1090</strain>
    </source>
</reference>
<dbReference type="EMBL" id="AE004969">
    <property type="protein sequence ID" value="AAW90724.1"/>
    <property type="molecule type" value="Genomic_DNA"/>
</dbReference>
<dbReference type="RefSeq" id="WP_010356285.1">
    <property type="nucleotide sequence ID" value="NC_002946.2"/>
</dbReference>
<dbReference type="RefSeq" id="YP_209136.1">
    <property type="nucleotide sequence ID" value="NC_002946.2"/>
</dbReference>
<dbReference type="SMR" id="Q5F513"/>
<dbReference type="STRING" id="242231.NGO_2126"/>
<dbReference type="GeneID" id="66754456"/>
<dbReference type="KEGG" id="ngo:NGO_2126"/>
<dbReference type="PATRIC" id="fig|242231.10.peg.2573"/>
<dbReference type="HOGENOM" id="CLU_114306_4_0_4"/>
<dbReference type="Proteomes" id="UP000000535">
    <property type="component" value="Chromosome"/>
</dbReference>
<dbReference type="GO" id="GO:1990904">
    <property type="term" value="C:ribonucleoprotein complex"/>
    <property type="evidence" value="ECO:0007669"/>
    <property type="project" value="UniProtKB-KW"/>
</dbReference>
<dbReference type="GO" id="GO:0005840">
    <property type="term" value="C:ribosome"/>
    <property type="evidence" value="ECO:0007669"/>
    <property type="project" value="UniProtKB-KW"/>
</dbReference>
<dbReference type="GO" id="GO:0046872">
    <property type="term" value="F:metal ion binding"/>
    <property type="evidence" value="ECO:0007669"/>
    <property type="project" value="UniProtKB-KW"/>
</dbReference>
<dbReference type="GO" id="GO:0019843">
    <property type="term" value="F:rRNA binding"/>
    <property type="evidence" value="ECO:0007669"/>
    <property type="project" value="UniProtKB-KW"/>
</dbReference>
<dbReference type="GO" id="GO:0003735">
    <property type="term" value="F:structural constituent of ribosome"/>
    <property type="evidence" value="ECO:0007669"/>
    <property type="project" value="InterPro"/>
</dbReference>
<dbReference type="GO" id="GO:0006412">
    <property type="term" value="P:translation"/>
    <property type="evidence" value="ECO:0007669"/>
    <property type="project" value="UniProtKB-UniRule"/>
</dbReference>
<dbReference type="Gene3D" id="4.10.830.30">
    <property type="entry name" value="Ribosomal protein L31"/>
    <property type="match status" value="1"/>
</dbReference>
<dbReference type="HAMAP" id="MF_00501">
    <property type="entry name" value="Ribosomal_bL31_1"/>
    <property type="match status" value="1"/>
</dbReference>
<dbReference type="InterPro" id="IPR034704">
    <property type="entry name" value="Ribosomal_bL28/bL31-like_sf"/>
</dbReference>
<dbReference type="InterPro" id="IPR002150">
    <property type="entry name" value="Ribosomal_bL31"/>
</dbReference>
<dbReference type="InterPro" id="IPR027491">
    <property type="entry name" value="Ribosomal_bL31_A"/>
</dbReference>
<dbReference type="InterPro" id="IPR042105">
    <property type="entry name" value="Ribosomal_bL31_sf"/>
</dbReference>
<dbReference type="NCBIfam" id="TIGR00105">
    <property type="entry name" value="L31"/>
    <property type="match status" value="1"/>
</dbReference>
<dbReference type="NCBIfam" id="NF000612">
    <property type="entry name" value="PRK00019.1"/>
    <property type="match status" value="1"/>
</dbReference>
<dbReference type="NCBIfam" id="NF001809">
    <property type="entry name" value="PRK00528.1"/>
    <property type="match status" value="1"/>
</dbReference>
<dbReference type="PANTHER" id="PTHR33280">
    <property type="entry name" value="50S RIBOSOMAL PROTEIN L31, CHLOROPLASTIC"/>
    <property type="match status" value="1"/>
</dbReference>
<dbReference type="PANTHER" id="PTHR33280:SF6">
    <property type="entry name" value="LARGE RIBOSOMAL SUBUNIT PROTEIN BL31A"/>
    <property type="match status" value="1"/>
</dbReference>
<dbReference type="Pfam" id="PF01197">
    <property type="entry name" value="Ribosomal_L31"/>
    <property type="match status" value="1"/>
</dbReference>
<dbReference type="PRINTS" id="PR01249">
    <property type="entry name" value="RIBOSOMALL31"/>
</dbReference>
<dbReference type="SUPFAM" id="SSF143800">
    <property type="entry name" value="L28p-like"/>
    <property type="match status" value="1"/>
</dbReference>
<dbReference type="PROSITE" id="PS01143">
    <property type="entry name" value="RIBOSOMAL_L31"/>
    <property type="match status" value="1"/>
</dbReference>
<gene>
    <name evidence="1" type="primary">rpmE</name>
    <name type="ordered locus">NGO_2126</name>
</gene>
<protein>
    <recommendedName>
        <fullName evidence="1">Large ribosomal subunit protein bL31</fullName>
    </recommendedName>
    <alternativeName>
        <fullName evidence="2">50S ribosomal protein L31</fullName>
    </alternativeName>
</protein>
<proteinExistence type="inferred from homology"/>